<accession>Q8G5B7</accession>
<name>EFTU_BIFLO</name>
<reference key="1">
    <citation type="journal article" date="2002" name="Proc. Natl. Acad. Sci. U.S.A.">
        <title>The genome sequence of Bifidobacterium longum reflects its adaptation to the human gastrointestinal tract.</title>
        <authorList>
            <person name="Schell M.A."/>
            <person name="Karmirantzou M."/>
            <person name="Snel B."/>
            <person name="Vilanova D."/>
            <person name="Berger B."/>
            <person name="Pessi G."/>
            <person name="Zwahlen M.-C."/>
            <person name="Desiere F."/>
            <person name="Bork P."/>
            <person name="Delley M."/>
            <person name="Pridmore R.D."/>
            <person name="Arigoni F."/>
        </authorList>
    </citation>
    <scope>NUCLEOTIDE SEQUENCE [LARGE SCALE GENOMIC DNA]</scope>
    <source>
        <strain>NCC 2705</strain>
    </source>
</reference>
<dbReference type="EC" id="3.6.5.3" evidence="2"/>
<dbReference type="EMBL" id="AE014295">
    <property type="protein sequence ID" value="AAN24905.1"/>
    <property type="molecule type" value="Genomic_DNA"/>
</dbReference>
<dbReference type="RefSeq" id="NP_696269.1">
    <property type="nucleotide sequence ID" value="NC_004307.2"/>
</dbReference>
<dbReference type="RefSeq" id="WP_007051202.1">
    <property type="nucleotide sequence ID" value="NC_004307.2"/>
</dbReference>
<dbReference type="SMR" id="Q8G5B7"/>
<dbReference type="STRING" id="206672.BL1097"/>
<dbReference type="MoonProt" id="Q8G5B7"/>
<dbReference type="EnsemblBacteria" id="AAN24905">
    <property type="protein sequence ID" value="AAN24905"/>
    <property type="gene ID" value="BL1097"/>
</dbReference>
<dbReference type="GeneID" id="69577755"/>
<dbReference type="KEGG" id="blo:BL1097"/>
<dbReference type="PATRIC" id="fig|206672.9.peg.804"/>
<dbReference type="HOGENOM" id="CLU_007265_0_1_11"/>
<dbReference type="OrthoDB" id="9803139at2"/>
<dbReference type="PhylomeDB" id="Q8G5B7"/>
<dbReference type="Proteomes" id="UP000000439">
    <property type="component" value="Chromosome"/>
</dbReference>
<dbReference type="GO" id="GO:0005829">
    <property type="term" value="C:cytosol"/>
    <property type="evidence" value="ECO:0007669"/>
    <property type="project" value="TreeGrafter"/>
</dbReference>
<dbReference type="GO" id="GO:0005525">
    <property type="term" value="F:GTP binding"/>
    <property type="evidence" value="ECO:0007669"/>
    <property type="project" value="UniProtKB-UniRule"/>
</dbReference>
<dbReference type="GO" id="GO:0003924">
    <property type="term" value="F:GTPase activity"/>
    <property type="evidence" value="ECO:0007669"/>
    <property type="project" value="InterPro"/>
</dbReference>
<dbReference type="GO" id="GO:0003746">
    <property type="term" value="F:translation elongation factor activity"/>
    <property type="evidence" value="ECO:0007669"/>
    <property type="project" value="UniProtKB-UniRule"/>
</dbReference>
<dbReference type="CDD" id="cd01884">
    <property type="entry name" value="EF_Tu"/>
    <property type="match status" value="1"/>
</dbReference>
<dbReference type="CDD" id="cd03697">
    <property type="entry name" value="EFTU_II"/>
    <property type="match status" value="1"/>
</dbReference>
<dbReference type="CDD" id="cd03707">
    <property type="entry name" value="EFTU_III"/>
    <property type="match status" value="1"/>
</dbReference>
<dbReference type="FunFam" id="2.40.30.10:FF:000001">
    <property type="entry name" value="Elongation factor Tu"/>
    <property type="match status" value="1"/>
</dbReference>
<dbReference type="FunFam" id="3.40.50.300:FF:000003">
    <property type="entry name" value="Elongation factor Tu"/>
    <property type="match status" value="1"/>
</dbReference>
<dbReference type="Gene3D" id="3.40.50.300">
    <property type="entry name" value="P-loop containing nucleotide triphosphate hydrolases"/>
    <property type="match status" value="1"/>
</dbReference>
<dbReference type="Gene3D" id="2.40.30.10">
    <property type="entry name" value="Translation factors"/>
    <property type="match status" value="2"/>
</dbReference>
<dbReference type="HAMAP" id="MF_00118_B">
    <property type="entry name" value="EF_Tu_B"/>
    <property type="match status" value="1"/>
</dbReference>
<dbReference type="InterPro" id="IPR041709">
    <property type="entry name" value="EF-Tu_GTP-bd"/>
</dbReference>
<dbReference type="InterPro" id="IPR050055">
    <property type="entry name" value="EF-Tu_GTPase"/>
</dbReference>
<dbReference type="InterPro" id="IPR004161">
    <property type="entry name" value="EFTu-like_2"/>
</dbReference>
<dbReference type="InterPro" id="IPR033720">
    <property type="entry name" value="EFTU_2"/>
</dbReference>
<dbReference type="InterPro" id="IPR031157">
    <property type="entry name" value="G_TR_CS"/>
</dbReference>
<dbReference type="InterPro" id="IPR027417">
    <property type="entry name" value="P-loop_NTPase"/>
</dbReference>
<dbReference type="InterPro" id="IPR005225">
    <property type="entry name" value="Small_GTP-bd"/>
</dbReference>
<dbReference type="InterPro" id="IPR000795">
    <property type="entry name" value="T_Tr_GTP-bd_dom"/>
</dbReference>
<dbReference type="InterPro" id="IPR009000">
    <property type="entry name" value="Transl_B-barrel_sf"/>
</dbReference>
<dbReference type="InterPro" id="IPR009001">
    <property type="entry name" value="Transl_elong_EF1A/Init_IF2_C"/>
</dbReference>
<dbReference type="InterPro" id="IPR004541">
    <property type="entry name" value="Transl_elong_EFTu/EF1A_bac/org"/>
</dbReference>
<dbReference type="InterPro" id="IPR004160">
    <property type="entry name" value="Transl_elong_EFTu/EF1A_C"/>
</dbReference>
<dbReference type="NCBIfam" id="TIGR00485">
    <property type="entry name" value="EF-Tu"/>
    <property type="match status" value="1"/>
</dbReference>
<dbReference type="NCBIfam" id="NF000766">
    <property type="entry name" value="PRK00049.1"/>
    <property type="match status" value="1"/>
</dbReference>
<dbReference type="NCBIfam" id="NF009372">
    <property type="entry name" value="PRK12735.1"/>
    <property type="match status" value="1"/>
</dbReference>
<dbReference type="NCBIfam" id="NF009373">
    <property type="entry name" value="PRK12736.1"/>
    <property type="match status" value="1"/>
</dbReference>
<dbReference type="NCBIfam" id="TIGR00231">
    <property type="entry name" value="small_GTP"/>
    <property type="match status" value="1"/>
</dbReference>
<dbReference type="PANTHER" id="PTHR43721:SF22">
    <property type="entry name" value="ELONGATION FACTOR TU, MITOCHONDRIAL"/>
    <property type="match status" value="1"/>
</dbReference>
<dbReference type="PANTHER" id="PTHR43721">
    <property type="entry name" value="ELONGATION FACTOR TU-RELATED"/>
    <property type="match status" value="1"/>
</dbReference>
<dbReference type="Pfam" id="PF00009">
    <property type="entry name" value="GTP_EFTU"/>
    <property type="match status" value="1"/>
</dbReference>
<dbReference type="Pfam" id="PF03144">
    <property type="entry name" value="GTP_EFTU_D2"/>
    <property type="match status" value="1"/>
</dbReference>
<dbReference type="Pfam" id="PF03143">
    <property type="entry name" value="GTP_EFTU_D3"/>
    <property type="match status" value="1"/>
</dbReference>
<dbReference type="PRINTS" id="PR00315">
    <property type="entry name" value="ELONGATNFCT"/>
</dbReference>
<dbReference type="SUPFAM" id="SSF50465">
    <property type="entry name" value="EF-Tu/eEF-1alpha/eIF2-gamma C-terminal domain"/>
    <property type="match status" value="1"/>
</dbReference>
<dbReference type="SUPFAM" id="SSF52540">
    <property type="entry name" value="P-loop containing nucleoside triphosphate hydrolases"/>
    <property type="match status" value="1"/>
</dbReference>
<dbReference type="SUPFAM" id="SSF50447">
    <property type="entry name" value="Translation proteins"/>
    <property type="match status" value="1"/>
</dbReference>
<dbReference type="PROSITE" id="PS00301">
    <property type="entry name" value="G_TR_1"/>
    <property type="match status" value="1"/>
</dbReference>
<dbReference type="PROSITE" id="PS51722">
    <property type="entry name" value="G_TR_2"/>
    <property type="match status" value="1"/>
</dbReference>
<feature type="chain" id="PRO_1000015616" description="Elongation factor Tu">
    <location>
        <begin position="1"/>
        <end position="399"/>
    </location>
</feature>
<feature type="domain" description="tr-type G">
    <location>
        <begin position="10"/>
        <end position="209"/>
    </location>
</feature>
<feature type="region of interest" description="G1" evidence="1">
    <location>
        <begin position="19"/>
        <end position="26"/>
    </location>
</feature>
<feature type="region of interest" description="G2" evidence="1">
    <location>
        <begin position="62"/>
        <end position="66"/>
    </location>
</feature>
<feature type="region of interest" description="G3" evidence="1">
    <location>
        <begin position="83"/>
        <end position="86"/>
    </location>
</feature>
<feature type="region of interest" description="G4" evidence="1">
    <location>
        <begin position="138"/>
        <end position="141"/>
    </location>
</feature>
<feature type="region of interest" description="G5" evidence="1">
    <location>
        <begin position="175"/>
        <end position="177"/>
    </location>
</feature>
<feature type="binding site" evidence="2">
    <location>
        <begin position="19"/>
        <end position="26"/>
    </location>
    <ligand>
        <name>GTP</name>
        <dbReference type="ChEBI" id="CHEBI:37565"/>
    </ligand>
</feature>
<feature type="binding site" evidence="2">
    <location>
        <position position="26"/>
    </location>
    <ligand>
        <name>Mg(2+)</name>
        <dbReference type="ChEBI" id="CHEBI:18420"/>
    </ligand>
</feature>
<feature type="binding site" evidence="2">
    <location>
        <begin position="83"/>
        <end position="87"/>
    </location>
    <ligand>
        <name>GTP</name>
        <dbReference type="ChEBI" id="CHEBI:37565"/>
    </ligand>
</feature>
<feature type="binding site" evidence="2">
    <location>
        <begin position="138"/>
        <end position="141"/>
    </location>
    <ligand>
        <name>GTP</name>
        <dbReference type="ChEBI" id="CHEBI:37565"/>
    </ligand>
</feature>
<gene>
    <name evidence="2" type="primary">tuf</name>
    <name type="ordered locus">BL1097</name>
</gene>
<proteinExistence type="inferred from homology"/>
<comment type="function">
    <text evidence="2">GTP hydrolase that promotes the GTP-dependent binding of aminoacyl-tRNA to the A-site of ribosomes during protein biosynthesis.</text>
</comment>
<comment type="catalytic activity">
    <reaction evidence="2">
        <text>GTP + H2O = GDP + phosphate + H(+)</text>
        <dbReference type="Rhea" id="RHEA:19669"/>
        <dbReference type="ChEBI" id="CHEBI:15377"/>
        <dbReference type="ChEBI" id="CHEBI:15378"/>
        <dbReference type="ChEBI" id="CHEBI:37565"/>
        <dbReference type="ChEBI" id="CHEBI:43474"/>
        <dbReference type="ChEBI" id="CHEBI:58189"/>
        <dbReference type="EC" id="3.6.5.3"/>
    </reaction>
    <physiologicalReaction direction="left-to-right" evidence="2">
        <dbReference type="Rhea" id="RHEA:19670"/>
    </physiologicalReaction>
</comment>
<comment type="subunit">
    <text evidence="2">Monomer.</text>
</comment>
<comment type="subcellular location">
    <subcellularLocation>
        <location evidence="2">Cytoplasm</location>
    </subcellularLocation>
</comment>
<comment type="similarity">
    <text evidence="2">Belongs to the TRAFAC class translation factor GTPase superfamily. Classic translation factor GTPase family. EF-Tu/EF-1A subfamily.</text>
</comment>
<keyword id="KW-0963">Cytoplasm</keyword>
<keyword id="KW-0251">Elongation factor</keyword>
<keyword id="KW-0342">GTP-binding</keyword>
<keyword id="KW-0378">Hydrolase</keyword>
<keyword id="KW-0460">Magnesium</keyword>
<keyword id="KW-0479">Metal-binding</keyword>
<keyword id="KW-0547">Nucleotide-binding</keyword>
<keyword id="KW-0648">Protein biosynthesis</keyword>
<keyword id="KW-1185">Reference proteome</keyword>
<evidence type="ECO:0000250" key="1"/>
<evidence type="ECO:0000255" key="2">
    <source>
        <dbReference type="HAMAP-Rule" id="MF_00118"/>
    </source>
</evidence>
<sequence>MAKEKYERTKPHVNIGTIGHVDHGKTTLTAAISKVLHEEFPDVNPEYDFNQIDSAPEEAARGITINIAHIEYQTEKRHYAHVDCPGHADFVKNMITGAAQMDGAILVVAATDGPMAQTREHVLLARQVGVPKILVALNKCDMVDDEELIELVEEEVRDLLDENGFDRDCPVIHTSAYGALHDDAPDHEKWVQSVKDLMDAVDDYIPTPVHDLDKPFLMPIEDVFTISGRGTVVTGRVERGQLAVNTPVEIVGIRPTQQTTVTSIETFHKTMDACEAGDNTGLLLRGLGRDDVERGQVVAKPGSVTPHTKFEGEVYVLTKDEGGRHSPFFSNYRPQFYFRTTDVTGVIELPEGVEMVQPGDHATFTVELIQPIAMEEGLTFAVREGGHTVGSGRVTKILA</sequence>
<organism>
    <name type="scientific">Bifidobacterium longum (strain NCC 2705)</name>
    <dbReference type="NCBI Taxonomy" id="206672"/>
    <lineage>
        <taxon>Bacteria</taxon>
        <taxon>Bacillati</taxon>
        <taxon>Actinomycetota</taxon>
        <taxon>Actinomycetes</taxon>
        <taxon>Bifidobacteriales</taxon>
        <taxon>Bifidobacteriaceae</taxon>
        <taxon>Bifidobacterium</taxon>
    </lineage>
</organism>
<protein>
    <recommendedName>
        <fullName evidence="2">Elongation factor Tu</fullName>
        <shortName evidence="2">EF-Tu</shortName>
        <ecNumber evidence="2">3.6.5.3</ecNumber>
    </recommendedName>
</protein>